<feature type="chain" id="PRO_1000127008" description="Peptidase B">
    <location>
        <begin position="1"/>
        <end position="427"/>
    </location>
</feature>
<feature type="active site" evidence="1">
    <location>
        <position position="207"/>
    </location>
</feature>
<feature type="active site" evidence="1">
    <location>
        <position position="281"/>
    </location>
</feature>
<feature type="binding site" evidence="1">
    <location>
        <position position="195"/>
    </location>
    <ligand>
        <name>Mn(2+)</name>
        <dbReference type="ChEBI" id="CHEBI:29035"/>
        <label>2</label>
    </ligand>
</feature>
<feature type="binding site" evidence="1">
    <location>
        <position position="200"/>
    </location>
    <ligand>
        <name>Mn(2+)</name>
        <dbReference type="ChEBI" id="CHEBI:29035"/>
        <label>1</label>
    </ligand>
</feature>
<feature type="binding site" evidence="1">
    <location>
        <position position="200"/>
    </location>
    <ligand>
        <name>Mn(2+)</name>
        <dbReference type="ChEBI" id="CHEBI:29035"/>
        <label>2</label>
    </ligand>
</feature>
<feature type="binding site" evidence="1">
    <location>
        <position position="218"/>
    </location>
    <ligand>
        <name>Mn(2+)</name>
        <dbReference type="ChEBI" id="CHEBI:29035"/>
        <label>2</label>
    </ligand>
</feature>
<feature type="binding site" evidence="1">
    <location>
        <position position="277"/>
    </location>
    <ligand>
        <name>Mn(2+)</name>
        <dbReference type="ChEBI" id="CHEBI:29035"/>
        <label>1</label>
    </ligand>
</feature>
<feature type="binding site" evidence="1">
    <location>
        <position position="279"/>
    </location>
    <ligand>
        <name>Mn(2+)</name>
        <dbReference type="ChEBI" id="CHEBI:29035"/>
        <label>1</label>
    </ligand>
</feature>
<feature type="binding site" evidence="1">
    <location>
        <position position="279"/>
    </location>
    <ligand>
        <name>Mn(2+)</name>
        <dbReference type="ChEBI" id="CHEBI:29035"/>
        <label>2</label>
    </ligand>
</feature>
<sequence length="427" mass="46226">MTEAMKITLSTQPADARWGEKATYSINNDGITLHLNGADDLGLIQRAARKIDGLGIKHVQLSGEGWDADRCWAFWQGYKAPKGTRKVEWPDLDDAQRQELDNRLMIIDWVRDTINAPAEELGPSQLAQRAVDLISNVAGDRVTYRITKGEDLREQGYMGLHTVGRGSERSPVLLALDYNPTGDKEAPVYACLVGKGITFDSGGYSIKQTAFMDSMKSDMGGAATVTGALAFAITRGLNKRVKLFLCCADNLISGNAFKLGDIITYRNGKKVEVMNTDAEGRLVLADGLIDASAQKPEMIIDAATLTGAAKTALGNDYHALFSFDDALAGRLLASASQENEPFWRLPLAEFHRSQLPSNFAELNNTGSAAYPAGASTAAGFLSHFVENYQQGWLHIDCSATYRKAPVEQWSAGATGLGVRTIANLLTA</sequence>
<reference key="1">
    <citation type="journal article" date="2008" name="DNA Res.">
        <title>Complete genome sequence and comparative analysis of the wild-type commensal Escherichia coli strain SE11 isolated from a healthy adult.</title>
        <authorList>
            <person name="Oshima K."/>
            <person name="Toh H."/>
            <person name="Ogura Y."/>
            <person name="Sasamoto H."/>
            <person name="Morita H."/>
            <person name="Park S.-H."/>
            <person name="Ooka T."/>
            <person name="Iyoda S."/>
            <person name="Taylor T.D."/>
            <person name="Hayashi T."/>
            <person name="Itoh K."/>
            <person name="Hattori M."/>
        </authorList>
    </citation>
    <scope>NUCLEOTIDE SEQUENCE [LARGE SCALE GENOMIC DNA]</scope>
    <source>
        <strain>SE11</strain>
    </source>
</reference>
<gene>
    <name evidence="1" type="primary">pepB</name>
    <name type="ordered locus">ECSE_2809</name>
</gene>
<accession>B6I595</accession>
<name>PEPB_ECOSE</name>
<evidence type="ECO:0000255" key="1">
    <source>
        <dbReference type="HAMAP-Rule" id="MF_00504"/>
    </source>
</evidence>
<dbReference type="EC" id="3.4.11.23" evidence="1"/>
<dbReference type="EMBL" id="AP009240">
    <property type="protein sequence ID" value="BAG78333.1"/>
    <property type="molecule type" value="Genomic_DNA"/>
</dbReference>
<dbReference type="RefSeq" id="WP_000133582.1">
    <property type="nucleotide sequence ID" value="NC_011415.1"/>
</dbReference>
<dbReference type="SMR" id="B6I595"/>
<dbReference type="MEROPS" id="M17.004"/>
<dbReference type="GeneID" id="93774613"/>
<dbReference type="KEGG" id="ecy:ECSE_2809"/>
<dbReference type="HOGENOM" id="CLU_013734_7_1_6"/>
<dbReference type="Proteomes" id="UP000008199">
    <property type="component" value="Chromosome"/>
</dbReference>
<dbReference type="GO" id="GO:0005737">
    <property type="term" value="C:cytoplasm"/>
    <property type="evidence" value="ECO:0007669"/>
    <property type="project" value="UniProtKB-SubCell"/>
</dbReference>
<dbReference type="GO" id="GO:0030145">
    <property type="term" value="F:manganese ion binding"/>
    <property type="evidence" value="ECO:0007669"/>
    <property type="project" value="UniProtKB-UniRule"/>
</dbReference>
<dbReference type="GO" id="GO:0070006">
    <property type="term" value="F:metalloaminopeptidase activity"/>
    <property type="evidence" value="ECO:0007669"/>
    <property type="project" value="InterPro"/>
</dbReference>
<dbReference type="GO" id="GO:0006508">
    <property type="term" value="P:proteolysis"/>
    <property type="evidence" value="ECO:0007669"/>
    <property type="project" value="UniProtKB-UniRule"/>
</dbReference>
<dbReference type="CDD" id="cd00433">
    <property type="entry name" value="Peptidase_M17"/>
    <property type="match status" value="1"/>
</dbReference>
<dbReference type="FunFam" id="3.40.630.10:FF:000037">
    <property type="entry name" value="Peptidase B"/>
    <property type="match status" value="1"/>
</dbReference>
<dbReference type="Gene3D" id="3.40.630.10">
    <property type="entry name" value="Zn peptidases"/>
    <property type="match status" value="1"/>
</dbReference>
<dbReference type="HAMAP" id="MF_00504">
    <property type="entry name" value="Aminopeptidase_M17"/>
    <property type="match status" value="1"/>
</dbReference>
<dbReference type="InterPro" id="IPR011356">
    <property type="entry name" value="Leucine_aapep/pepB"/>
</dbReference>
<dbReference type="InterPro" id="IPR047620">
    <property type="entry name" value="M17_PepB-like_N"/>
</dbReference>
<dbReference type="InterPro" id="IPR008330">
    <property type="entry name" value="Pept_M17_PepB"/>
</dbReference>
<dbReference type="InterPro" id="IPR000819">
    <property type="entry name" value="Peptidase_M17_C"/>
</dbReference>
<dbReference type="NCBIfam" id="NF003450">
    <property type="entry name" value="PRK05015.1"/>
    <property type="match status" value="1"/>
</dbReference>
<dbReference type="PANTHER" id="PTHR11963">
    <property type="entry name" value="LEUCINE AMINOPEPTIDASE-RELATED"/>
    <property type="match status" value="1"/>
</dbReference>
<dbReference type="PANTHER" id="PTHR11963:SF20">
    <property type="entry name" value="PEPTIDASE B"/>
    <property type="match status" value="1"/>
</dbReference>
<dbReference type="Pfam" id="PF12404">
    <property type="entry name" value="DUF3663"/>
    <property type="match status" value="1"/>
</dbReference>
<dbReference type="Pfam" id="PF00883">
    <property type="entry name" value="Peptidase_M17"/>
    <property type="match status" value="1"/>
</dbReference>
<dbReference type="PIRSF" id="PIRSF036388">
    <property type="entry name" value="Ctsl_amnpptdse_B"/>
    <property type="match status" value="1"/>
</dbReference>
<dbReference type="PRINTS" id="PR00481">
    <property type="entry name" value="LAMNOPPTDASE"/>
</dbReference>
<dbReference type="SUPFAM" id="SSF53187">
    <property type="entry name" value="Zn-dependent exopeptidases"/>
    <property type="match status" value="1"/>
</dbReference>
<dbReference type="PROSITE" id="PS00631">
    <property type="entry name" value="CYTOSOL_AP"/>
    <property type="match status" value="1"/>
</dbReference>
<keyword id="KW-0031">Aminopeptidase</keyword>
<keyword id="KW-0963">Cytoplasm</keyword>
<keyword id="KW-0378">Hydrolase</keyword>
<keyword id="KW-0464">Manganese</keyword>
<keyword id="KW-0479">Metal-binding</keyword>
<keyword id="KW-0645">Protease</keyword>
<proteinExistence type="inferred from homology"/>
<comment type="function">
    <text evidence="1">Probably plays an important role in intracellular peptide degradation.</text>
</comment>
<comment type="catalytic activity">
    <reaction evidence="1">
        <text>Release of an N-terminal amino acid, Xaa, from a peptide or arylamide. Xaa is preferably Glu or Asp but may be other amino acids, including Leu, Met, His, Cys and Gln.</text>
        <dbReference type="EC" id="3.4.11.23"/>
    </reaction>
</comment>
<comment type="cofactor">
    <cofactor evidence="1">
        <name>Mn(2+)</name>
        <dbReference type="ChEBI" id="CHEBI:29035"/>
    </cofactor>
    <text evidence="1">Binds 2 manganese ions per subunit.</text>
</comment>
<comment type="subunit">
    <text evidence="1">Homohexamer.</text>
</comment>
<comment type="subcellular location">
    <subcellularLocation>
        <location evidence="1">Cytoplasm</location>
    </subcellularLocation>
</comment>
<comment type="similarity">
    <text evidence="1">Belongs to the peptidase M17 family.</text>
</comment>
<organism>
    <name type="scientific">Escherichia coli (strain SE11)</name>
    <dbReference type="NCBI Taxonomy" id="409438"/>
    <lineage>
        <taxon>Bacteria</taxon>
        <taxon>Pseudomonadati</taxon>
        <taxon>Pseudomonadota</taxon>
        <taxon>Gammaproteobacteria</taxon>
        <taxon>Enterobacterales</taxon>
        <taxon>Enterobacteriaceae</taxon>
        <taxon>Escherichia</taxon>
    </lineage>
</organism>
<protein>
    <recommendedName>
        <fullName evidence="1">Peptidase B</fullName>
        <ecNumber evidence="1">3.4.11.23</ecNumber>
    </recommendedName>
    <alternativeName>
        <fullName evidence="1">Aminopeptidase B</fullName>
    </alternativeName>
</protein>